<feature type="chain" id="PRO_1000051144" description="Small ribosomal subunit protein uS19">
    <location>
        <begin position="1"/>
        <end position="92"/>
    </location>
</feature>
<accession>A7MWI7</accession>
<gene>
    <name evidence="1" type="primary">rpsS</name>
    <name type="ordered locus">VIBHAR_00734</name>
</gene>
<evidence type="ECO:0000255" key="1">
    <source>
        <dbReference type="HAMAP-Rule" id="MF_00531"/>
    </source>
</evidence>
<evidence type="ECO:0000305" key="2"/>
<protein>
    <recommendedName>
        <fullName evidence="1">Small ribosomal subunit protein uS19</fullName>
    </recommendedName>
    <alternativeName>
        <fullName evidence="2">30S ribosomal protein S19</fullName>
    </alternativeName>
</protein>
<comment type="function">
    <text evidence="1">Protein S19 forms a complex with S13 that binds strongly to the 16S ribosomal RNA.</text>
</comment>
<comment type="similarity">
    <text evidence="1">Belongs to the universal ribosomal protein uS19 family.</text>
</comment>
<proteinExistence type="inferred from homology"/>
<dbReference type="EMBL" id="CP000789">
    <property type="protein sequence ID" value="ABU69735.1"/>
    <property type="molecule type" value="Genomic_DNA"/>
</dbReference>
<dbReference type="RefSeq" id="WP_005431614.1">
    <property type="nucleotide sequence ID" value="NC_022269.1"/>
</dbReference>
<dbReference type="SMR" id="A7MWI7"/>
<dbReference type="GeneID" id="83583119"/>
<dbReference type="KEGG" id="vha:VIBHAR_00734"/>
<dbReference type="PATRIC" id="fig|338187.25.peg.1880"/>
<dbReference type="Proteomes" id="UP000008152">
    <property type="component" value="Chromosome I"/>
</dbReference>
<dbReference type="GO" id="GO:0005737">
    <property type="term" value="C:cytoplasm"/>
    <property type="evidence" value="ECO:0007669"/>
    <property type="project" value="UniProtKB-ARBA"/>
</dbReference>
<dbReference type="GO" id="GO:0015935">
    <property type="term" value="C:small ribosomal subunit"/>
    <property type="evidence" value="ECO:0007669"/>
    <property type="project" value="InterPro"/>
</dbReference>
<dbReference type="GO" id="GO:0019843">
    <property type="term" value="F:rRNA binding"/>
    <property type="evidence" value="ECO:0007669"/>
    <property type="project" value="UniProtKB-UniRule"/>
</dbReference>
<dbReference type="GO" id="GO:0003735">
    <property type="term" value="F:structural constituent of ribosome"/>
    <property type="evidence" value="ECO:0007669"/>
    <property type="project" value="InterPro"/>
</dbReference>
<dbReference type="GO" id="GO:0000028">
    <property type="term" value="P:ribosomal small subunit assembly"/>
    <property type="evidence" value="ECO:0007669"/>
    <property type="project" value="TreeGrafter"/>
</dbReference>
<dbReference type="GO" id="GO:0006412">
    <property type="term" value="P:translation"/>
    <property type="evidence" value="ECO:0007669"/>
    <property type="project" value="UniProtKB-UniRule"/>
</dbReference>
<dbReference type="FunFam" id="3.30.860.10:FF:000001">
    <property type="entry name" value="30S ribosomal protein S19"/>
    <property type="match status" value="1"/>
</dbReference>
<dbReference type="Gene3D" id="3.30.860.10">
    <property type="entry name" value="30s Ribosomal Protein S19, Chain A"/>
    <property type="match status" value="1"/>
</dbReference>
<dbReference type="HAMAP" id="MF_00531">
    <property type="entry name" value="Ribosomal_uS19"/>
    <property type="match status" value="1"/>
</dbReference>
<dbReference type="InterPro" id="IPR002222">
    <property type="entry name" value="Ribosomal_uS19"/>
</dbReference>
<dbReference type="InterPro" id="IPR005732">
    <property type="entry name" value="Ribosomal_uS19_bac-type"/>
</dbReference>
<dbReference type="InterPro" id="IPR020934">
    <property type="entry name" value="Ribosomal_uS19_CS"/>
</dbReference>
<dbReference type="InterPro" id="IPR023575">
    <property type="entry name" value="Ribosomal_uS19_SF"/>
</dbReference>
<dbReference type="NCBIfam" id="TIGR01050">
    <property type="entry name" value="rpsS_bact"/>
    <property type="match status" value="1"/>
</dbReference>
<dbReference type="PANTHER" id="PTHR11880">
    <property type="entry name" value="RIBOSOMAL PROTEIN S19P FAMILY MEMBER"/>
    <property type="match status" value="1"/>
</dbReference>
<dbReference type="PANTHER" id="PTHR11880:SF8">
    <property type="entry name" value="SMALL RIBOSOMAL SUBUNIT PROTEIN US19M"/>
    <property type="match status" value="1"/>
</dbReference>
<dbReference type="Pfam" id="PF00203">
    <property type="entry name" value="Ribosomal_S19"/>
    <property type="match status" value="1"/>
</dbReference>
<dbReference type="PIRSF" id="PIRSF002144">
    <property type="entry name" value="Ribosomal_S19"/>
    <property type="match status" value="1"/>
</dbReference>
<dbReference type="PRINTS" id="PR00975">
    <property type="entry name" value="RIBOSOMALS19"/>
</dbReference>
<dbReference type="SUPFAM" id="SSF54570">
    <property type="entry name" value="Ribosomal protein S19"/>
    <property type="match status" value="1"/>
</dbReference>
<dbReference type="PROSITE" id="PS00323">
    <property type="entry name" value="RIBOSOMAL_S19"/>
    <property type="match status" value="1"/>
</dbReference>
<keyword id="KW-0687">Ribonucleoprotein</keyword>
<keyword id="KW-0689">Ribosomal protein</keyword>
<keyword id="KW-0694">RNA-binding</keyword>
<keyword id="KW-0699">rRNA-binding</keyword>
<reference key="1">
    <citation type="submission" date="2007-08" db="EMBL/GenBank/DDBJ databases">
        <authorList>
            <consortium name="The Vibrio harveyi Genome Sequencing Project"/>
            <person name="Bassler B."/>
            <person name="Clifton S.W."/>
            <person name="Fulton L."/>
            <person name="Delehaunty K."/>
            <person name="Fronick C."/>
            <person name="Harrison M."/>
            <person name="Markivic C."/>
            <person name="Fulton R."/>
            <person name="Tin-Wollam A.-M."/>
            <person name="Shah N."/>
            <person name="Pepin K."/>
            <person name="Nash W."/>
            <person name="Thiruvilangam P."/>
            <person name="Bhonagiri V."/>
            <person name="Waters C."/>
            <person name="Tu K.C."/>
            <person name="Irgon J."/>
            <person name="Wilson R.K."/>
        </authorList>
    </citation>
    <scope>NUCLEOTIDE SEQUENCE [LARGE SCALE GENOMIC DNA]</scope>
    <source>
        <strain>ATCC BAA-1116 / BB120</strain>
    </source>
</reference>
<sequence length="92" mass="10427">MPRSLKKGPFIDLHLLKKVEKAVESGDKKPLKTWSRRSMIIPSMIGLTIAVHNGRQHVPVFVTEEMIGHKLGEFAPTRTYRGHAADKKAKKR</sequence>
<name>RS19_VIBC1</name>
<organism>
    <name type="scientific">Vibrio campbellii (strain ATCC BAA-1116)</name>
    <dbReference type="NCBI Taxonomy" id="2902295"/>
    <lineage>
        <taxon>Bacteria</taxon>
        <taxon>Pseudomonadati</taxon>
        <taxon>Pseudomonadota</taxon>
        <taxon>Gammaproteobacteria</taxon>
        <taxon>Vibrionales</taxon>
        <taxon>Vibrionaceae</taxon>
        <taxon>Vibrio</taxon>
    </lineage>
</organism>